<sequence length="130" mass="13684">MAEKDKWGVAHVYSSFNNTIITVTDITGAETITQWSGGKVVRSDRQESSPFAAMEAANRVADDIKEKGIAGLHIKVRASGGNGPRTPGPGAQATIRALARAGIKIGKIEDVTPIPHDGTGRPGGKRGRRV</sequence>
<accession>Q2NFZ5</accession>
<feature type="chain" id="PRO_0000294899" description="Small ribosomal subunit protein uS11">
    <location>
        <begin position="1"/>
        <end position="130"/>
    </location>
</feature>
<feature type="region of interest" description="Disordered" evidence="2">
    <location>
        <begin position="109"/>
        <end position="130"/>
    </location>
</feature>
<proteinExistence type="inferred from homology"/>
<reference key="1">
    <citation type="journal article" date="2006" name="J. Bacteriol.">
        <title>The genome sequence of Methanosphaera stadtmanae reveals why this human intestinal archaeon is restricted to methanol and H2 for methane formation and ATP synthesis.</title>
        <authorList>
            <person name="Fricke W.F."/>
            <person name="Seedorf H."/>
            <person name="Henne A."/>
            <person name="Kruer M."/>
            <person name="Liesegang H."/>
            <person name="Hedderich R."/>
            <person name="Gottschalk G."/>
            <person name="Thauer R.K."/>
        </authorList>
    </citation>
    <scope>NUCLEOTIDE SEQUENCE [LARGE SCALE GENOMIC DNA]</scope>
    <source>
        <strain>ATCC 43021 / DSM 3091 / JCM 11832 / MCB-3</strain>
    </source>
</reference>
<keyword id="KW-1185">Reference proteome</keyword>
<keyword id="KW-0687">Ribonucleoprotein</keyword>
<keyword id="KW-0689">Ribosomal protein</keyword>
<keyword id="KW-0694">RNA-binding</keyword>
<keyword id="KW-0699">rRNA-binding</keyword>
<comment type="function">
    <text evidence="1">Located on the platform of the 30S subunit.</text>
</comment>
<comment type="subunit">
    <text evidence="1">Part of the 30S ribosomal subunit.</text>
</comment>
<comment type="similarity">
    <text evidence="1">Belongs to the universal ribosomal protein uS11 family.</text>
</comment>
<gene>
    <name evidence="1" type="primary">rps11</name>
    <name type="ordered locus">Msp_0869</name>
</gene>
<protein>
    <recommendedName>
        <fullName evidence="1">Small ribosomal subunit protein uS11</fullName>
    </recommendedName>
    <alternativeName>
        <fullName evidence="3">30S ribosomal protein S11</fullName>
    </alternativeName>
</protein>
<organism>
    <name type="scientific">Methanosphaera stadtmanae (strain ATCC 43021 / DSM 3091 / JCM 11832 / MCB-3)</name>
    <dbReference type="NCBI Taxonomy" id="339860"/>
    <lineage>
        <taxon>Archaea</taxon>
        <taxon>Methanobacteriati</taxon>
        <taxon>Methanobacteriota</taxon>
        <taxon>Methanomada group</taxon>
        <taxon>Methanobacteria</taxon>
        <taxon>Methanobacteriales</taxon>
        <taxon>Methanobacteriaceae</taxon>
        <taxon>Methanosphaera</taxon>
    </lineage>
</organism>
<evidence type="ECO:0000255" key="1">
    <source>
        <dbReference type="HAMAP-Rule" id="MF_01310"/>
    </source>
</evidence>
<evidence type="ECO:0000256" key="2">
    <source>
        <dbReference type="SAM" id="MobiDB-lite"/>
    </source>
</evidence>
<evidence type="ECO:0000305" key="3"/>
<name>RS11_METST</name>
<dbReference type="EMBL" id="CP000102">
    <property type="protein sequence ID" value="ABC57258.1"/>
    <property type="molecule type" value="Genomic_DNA"/>
</dbReference>
<dbReference type="RefSeq" id="WP_011406457.1">
    <property type="nucleotide sequence ID" value="NC_007681.1"/>
</dbReference>
<dbReference type="SMR" id="Q2NFZ5"/>
<dbReference type="STRING" id="339860.Msp_0869"/>
<dbReference type="KEGG" id="mst:Msp_0869"/>
<dbReference type="eggNOG" id="arCOG04240">
    <property type="taxonomic scope" value="Archaea"/>
</dbReference>
<dbReference type="HOGENOM" id="CLU_072439_6_1_2"/>
<dbReference type="OrthoDB" id="12054at2157"/>
<dbReference type="Proteomes" id="UP000001931">
    <property type="component" value="Chromosome"/>
</dbReference>
<dbReference type="GO" id="GO:1990904">
    <property type="term" value="C:ribonucleoprotein complex"/>
    <property type="evidence" value="ECO:0007669"/>
    <property type="project" value="UniProtKB-KW"/>
</dbReference>
<dbReference type="GO" id="GO:0005840">
    <property type="term" value="C:ribosome"/>
    <property type="evidence" value="ECO:0007669"/>
    <property type="project" value="UniProtKB-KW"/>
</dbReference>
<dbReference type="GO" id="GO:0019843">
    <property type="term" value="F:rRNA binding"/>
    <property type="evidence" value="ECO:0007669"/>
    <property type="project" value="UniProtKB-UniRule"/>
</dbReference>
<dbReference type="GO" id="GO:0003735">
    <property type="term" value="F:structural constituent of ribosome"/>
    <property type="evidence" value="ECO:0007669"/>
    <property type="project" value="InterPro"/>
</dbReference>
<dbReference type="GO" id="GO:0006412">
    <property type="term" value="P:translation"/>
    <property type="evidence" value="ECO:0007669"/>
    <property type="project" value="UniProtKB-UniRule"/>
</dbReference>
<dbReference type="FunFam" id="3.30.420.80:FF:000007">
    <property type="entry name" value="30S ribosomal protein S11"/>
    <property type="match status" value="1"/>
</dbReference>
<dbReference type="Gene3D" id="3.30.420.80">
    <property type="entry name" value="Ribosomal protein S11"/>
    <property type="match status" value="1"/>
</dbReference>
<dbReference type="HAMAP" id="MF_01310">
    <property type="entry name" value="Ribosomal_uS11"/>
    <property type="match status" value="1"/>
</dbReference>
<dbReference type="InterPro" id="IPR001971">
    <property type="entry name" value="Ribosomal_uS11"/>
</dbReference>
<dbReference type="InterPro" id="IPR019961">
    <property type="entry name" value="Ribosomal_uS11_archaeal"/>
</dbReference>
<dbReference type="InterPro" id="IPR018102">
    <property type="entry name" value="Ribosomal_uS11_CS"/>
</dbReference>
<dbReference type="InterPro" id="IPR036967">
    <property type="entry name" value="Ribosomal_uS11_sf"/>
</dbReference>
<dbReference type="NCBIfam" id="TIGR03628">
    <property type="entry name" value="arch_S11P"/>
    <property type="match status" value="1"/>
</dbReference>
<dbReference type="NCBIfam" id="NF007176">
    <property type="entry name" value="PRK09607.1"/>
    <property type="match status" value="1"/>
</dbReference>
<dbReference type="PANTHER" id="PTHR11759">
    <property type="entry name" value="40S RIBOSOMAL PROTEIN S14/30S RIBOSOMAL PROTEIN S11"/>
    <property type="match status" value="1"/>
</dbReference>
<dbReference type="Pfam" id="PF00411">
    <property type="entry name" value="Ribosomal_S11"/>
    <property type="match status" value="1"/>
</dbReference>
<dbReference type="PIRSF" id="PIRSF002131">
    <property type="entry name" value="Ribosomal_S11"/>
    <property type="match status" value="1"/>
</dbReference>
<dbReference type="SUPFAM" id="SSF53137">
    <property type="entry name" value="Translational machinery components"/>
    <property type="match status" value="1"/>
</dbReference>
<dbReference type="PROSITE" id="PS00054">
    <property type="entry name" value="RIBOSOMAL_S11"/>
    <property type="match status" value="1"/>
</dbReference>